<name>Y3498_VIBCM</name>
<accession>C3LW05</accession>
<evidence type="ECO:0000255" key="1">
    <source>
        <dbReference type="HAMAP-Rule" id="MF_01584"/>
    </source>
</evidence>
<comment type="similarity">
    <text evidence="1">Belongs to the UPF0502 family.</text>
</comment>
<protein>
    <recommendedName>
        <fullName evidence="1">UPF0502 protein VCM66_A0698</fullName>
    </recommendedName>
</protein>
<gene>
    <name type="ordered locus">VCM66_A0698</name>
</gene>
<feature type="chain" id="PRO_1000185668" description="UPF0502 protein VCM66_A0698">
    <location>
        <begin position="1"/>
        <end position="216"/>
    </location>
</feature>
<organism>
    <name type="scientific">Vibrio cholerae serotype O1 (strain M66-2)</name>
    <dbReference type="NCBI Taxonomy" id="579112"/>
    <lineage>
        <taxon>Bacteria</taxon>
        <taxon>Pseudomonadati</taxon>
        <taxon>Pseudomonadota</taxon>
        <taxon>Gammaproteobacteria</taxon>
        <taxon>Vibrionales</taxon>
        <taxon>Vibrionaceae</taxon>
        <taxon>Vibrio</taxon>
    </lineage>
</organism>
<proteinExistence type="inferred from homology"/>
<sequence length="216" mass="24207">MNIQLSPLEARVIGCLIEKEVTTPDHYPLTLNSLTTACNQKSNREPVLNLSEAEVQDTVEGLIARRLVSDESSFNSRTSKYQHRFCNTEFGDLKLNQQELGLICCLLLRGAQTPGELRTRTNRLCTFTDVKETEAVLERLANRDSGALVVKLPREPGKRESRYHHLFCGEVDMAAFATSSDNEANASSQYAELEQEVAALREEVAELRALIEQHLS</sequence>
<dbReference type="EMBL" id="CP001234">
    <property type="protein sequence ID" value="ACP07660.1"/>
    <property type="molecule type" value="Genomic_DNA"/>
</dbReference>
<dbReference type="RefSeq" id="WP_001025631.1">
    <property type="nucleotide sequence ID" value="NC_012580.1"/>
</dbReference>
<dbReference type="SMR" id="C3LW05"/>
<dbReference type="KEGG" id="vcm:VCM66_A0698"/>
<dbReference type="HOGENOM" id="CLU_057831_2_0_6"/>
<dbReference type="Proteomes" id="UP000001217">
    <property type="component" value="Chromosome II"/>
</dbReference>
<dbReference type="Gene3D" id="1.10.10.10">
    <property type="entry name" value="Winged helix-like DNA-binding domain superfamily/Winged helix DNA-binding domain"/>
    <property type="match status" value="2"/>
</dbReference>
<dbReference type="HAMAP" id="MF_01584">
    <property type="entry name" value="UPF0502"/>
    <property type="match status" value="1"/>
</dbReference>
<dbReference type="InterPro" id="IPR007432">
    <property type="entry name" value="DUF480"/>
</dbReference>
<dbReference type="InterPro" id="IPR036388">
    <property type="entry name" value="WH-like_DNA-bd_sf"/>
</dbReference>
<dbReference type="InterPro" id="IPR036390">
    <property type="entry name" value="WH_DNA-bd_sf"/>
</dbReference>
<dbReference type="PANTHER" id="PTHR38768">
    <property type="entry name" value="UPF0502 PROTEIN YCEH"/>
    <property type="match status" value="1"/>
</dbReference>
<dbReference type="PANTHER" id="PTHR38768:SF1">
    <property type="entry name" value="UPF0502 PROTEIN YCEH"/>
    <property type="match status" value="1"/>
</dbReference>
<dbReference type="Pfam" id="PF04337">
    <property type="entry name" value="DUF480"/>
    <property type="match status" value="1"/>
</dbReference>
<dbReference type="SUPFAM" id="SSF46785">
    <property type="entry name" value="Winged helix' DNA-binding domain"/>
    <property type="match status" value="2"/>
</dbReference>
<reference key="1">
    <citation type="journal article" date="2008" name="PLoS ONE">
        <title>A recalibrated molecular clock and independent origins for the cholera pandemic clones.</title>
        <authorList>
            <person name="Feng L."/>
            <person name="Reeves P.R."/>
            <person name="Lan R."/>
            <person name="Ren Y."/>
            <person name="Gao C."/>
            <person name="Zhou Z."/>
            <person name="Ren Y."/>
            <person name="Cheng J."/>
            <person name="Wang W."/>
            <person name="Wang J."/>
            <person name="Qian W."/>
            <person name="Li D."/>
            <person name="Wang L."/>
        </authorList>
    </citation>
    <scope>NUCLEOTIDE SEQUENCE [LARGE SCALE GENOMIC DNA]</scope>
    <source>
        <strain>M66-2</strain>
    </source>
</reference>